<organism>
    <name type="scientific">Dechloromonas aromatica (strain RCB)</name>
    <dbReference type="NCBI Taxonomy" id="159087"/>
    <lineage>
        <taxon>Bacteria</taxon>
        <taxon>Pseudomonadati</taxon>
        <taxon>Pseudomonadota</taxon>
        <taxon>Betaproteobacteria</taxon>
        <taxon>Rhodocyclales</taxon>
        <taxon>Azonexaceae</taxon>
        <taxon>Dechloromonas</taxon>
    </lineage>
</organism>
<name>RRAAH_DECAR</name>
<keyword id="KW-0456">Lyase</keyword>
<keyword id="KW-0479">Metal-binding</keyword>
<accession>Q47BF5</accession>
<reference key="1">
    <citation type="journal article" date="2009" name="BMC Genomics">
        <title>Metabolic analysis of the soil microbe Dechloromonas aromatica str. RCB: indications of a surprisingly complex life-style and cryptic anaerobic pathways for aromatic degradation.</title>
        <authorList>
            <person name="Salinero K.K."/>
            <person name="Keller K."/>
            <person name="Feil W.S."/>
            <person name="Feil H."/>
            <person name="Trong S."/>
            <person name="Di Bartolo G."/>
            <person name="Lapidus A."/>
        </authorList>
    </citation>
    <scope>NUCLEOTIDE SEQUENCE [LARGE SCALE GENOMIC DNA]</scope>
    <source>
        <strain>RCB</strain>
    </source>
</reference>
<proteinExistence type="inferred from homology"/>
<sequence>MTFKTPDLCDEFESELGKTVRVVTPMFQRYGGRTSFSGQIVTLKIFEDNSLVREVFGEDGKGKVLVIDGGGSLRCALVGDQLAILANKNGWEGVVVYGCIRDSGDINGIDIGVRALNTHPQKTLKKGVGDKNVAVTFGGVTFNPGEYLYADEDGVLVSGKALT</sequence>
<gene>
    <name type="ordered locus">Daro_3096</name>
</gene>
<evidence type="ECO:0000250" key="1"/>
<evidence type="ECO:0000305" key="2"/>
<comment type="function">
    <text evidence="1">Catalyzes the aldol cleavage of 4-hydroxy-4-methyl-2-oxoglutarate (HMG) into 2 molecules of pyruvate. Also contains a secondary oxaloacetate (OAA) decarboxylase activity due to the common pyruvate enolate transition state formed following C-C bond cleavage in the retro-aldol and decarboxylation reactions (By similarity).</text>
</comment>
<comment type="catalytic activity">
    <reaction>
        <text>4-hydroxy-4-methyl-2-oxoglutarate = 2 pyruvate</text>
        <dbReference type="Rhea" id="RHEA:22748"/>
        <dbReference type="ChEBI" id="CHEBI:15361"/>
        <dbReference type="ChEBI" id="CHEBI:58276"/>
        <dbReference type="EC" id="4.1.3.17"/>
    </reaction>
</comment>
<comment type="catalytic activity">
    <reaction>
        <text>oxaloacetate + H(+) = pyruvate + CO2</text>
        <dbReference type="Rhea" id="RHEA:15641"/>
        <dbReference type="ChEBI" id="CHEBI:15361"/>
        <dbReference type="ChEBI" id="CHEBI:15378"/>
        <dbReference type="ChEBI" id="CHEBI:16452"/>
        <dbReference type="ChEBI" id="CHEBI:16526"/>
        <dbReference type="EC" id="4.1.1.112"/>
    </reaction>
</comment>
<comment type="cofactor">
    <cofactor evidence="1">
        <name>a divalent metal cation</name>
        <dbReference type="ChEBI" id="CHEBI:60240"/>
    </cofactor>
    <text evidence="1">Divalent metal cation.</text>
</comment>
<comment type="subunit">
    <text evidence="1">Homotrimer.</text>
</comment>
<comment type="similarity">
    <text evidence="2">Belongs to the class II aldolase/RraA-like family.</text>
</comment>
<feature type="chain" id="PRO_1000013836" description="Putative 4-hydroxy-4-methyl-2-oxoglutarate aldolase">
    <location>
        <begin position="1"/>
        <end position="163"/>
    </location>
</feature>
<feature type="binding site" evidence="1">
    <location>
        <begin position="79"/>
        <end position="82"/>
    </location>
    <ligand>
        <name>substrate</name>
    </ligand>
</feature>
<feature type="binding site" evidence="1">
    <location>
        <position position="101"/>
    </location>
    <ligand>
        <name>substrate</name>
    </ligand>
</feature>
<feature type="binding site" evidence="1">
    <location>
        <position position="102"/>
    </location>
    <ligand>
        <name>a divalent metal cation</name>
        <dbReference type="ChEBI" id="CHEBI:60240"/>
    </ligand>
</feature>
<protein>
    <recommendedName>
        <fullName>Putative 4-hydroxy-4-methyl-2-oxoglutarate aldolase</fullName>
        <shortName>HMG aldolase</shortName>
        <ecNumber>4.1.3.17</ecNumber>
    </recommendedName>
    <alternativeName>
        <fullName>Oxaloacetate decarboxylase</fullName>
        <shortName>OAA decarboxylase</shortName>
        <ecNumber>4.1.1.112</ecNumber>
    </alternativeName>
    <alternativeName>
        <fullName>Regulator of ribonuclease activity homolog</fullName>
    </alternativeName>
    <alternativeName>
        <fullName>RraA-like protein</fullName>
    </alternativeName>
</protein>
<dbReference type="EC" id="4.1.3.17"/>
<dbReference type="EC" id="4.1.1.112"/>
<dbReference type="EMBL" id="CP000089">
    <property type="protein sequence ID" value="AAZ47826.1"/>
    <property type="molecule type" value="Genomic_DNA"/>
</dbReference>
<dbReference type="SMR" id="Q47BF5"/>
<dbReference type="STRING" id="159087.Daro_3096"/>
<dbReference type="KEGG" id="dar:Daro_3096"/>
<dbReference type="eggNOG" id="COG0684">
    <property type="taxonomic scope" value="Bacteria"/>
</dbReference>
<dbReference type="HOGENOM" id="CLU_072626_4_0_4"/>
<dbReference type="OrthoDB" id="943692at2"/>
<dbReference type="GO" id="GO:0047443">
    <property type="term" value="F:4-hydroxy-4-methyl-2-oxoglutarate aldolase activity"/>
    <property type="evidence" value="ECO:0007669"/>
    <property type="project" value="UniProtKB-EC"/>
</dbReference>
<dbReference type="GO" id="GO:0046872">
    <property type="term" value="F:metal ion binding"/>
    <property type="evidence" value="ECO:0007669"/>
    <property type="project" value="UniProtKB-KW"/>
</dbReference>
<dbReference type="GO" id="GO:0008948">
    <property type="term" value="F:oxaloacetate decarboxylase activity"/>
    <property type="evidence" value="ECO:0007669"/>
    <property type="project" value="UniProtKB-EC"/>
</dbReference>
<dbReference type="GO" id="GO:0008428">
    <property type="term" value="F:ribonuclease inhibitor activity"/>
    <property type="evidence" value="ECO:0007669"/>
    <property type="project" value="InterPro"/>
</dbReference>
<dbReference type="GO" id="GO:0051252">
    <property type="term" value="P:regulation of RNA metabolic process"/>
    <property type="evidence" value="ECO:0007669"/>
    <property type="project" value="InterPro"/>
</dbReference>
<dbReference type="CDD" id="cd16841">
    <property type="entry name" value="RraA_family"/>
    <property type="match status" value="1"/>
</dbReference>
<dbReference type="Gene3D" id="3.50.30.40">
    <property type="entry name" value="Ribonuclease E inhibitor RraA/RraA-like"/>
    <property type="match status" value="1"/>
</dbReference>
<dbReference type="InterPro" id="IPR010203">
    <property type="entry name" value="RraA"/>
</dbReference>
<dbReference type="InterPro" id="IPR005493">
    <property type="entry name" value="RraA/RraA-like"/>
</dbReference>
<dbReference type="InterPro" id="IPR036704">
    <property type="entry name" value="RraA/RraA-like_sf"/>
</dbReference>
<dbReference type="NCBIfam" id="TIGR01935">
    <property type="entry name" value="NOT-MenG"/>
    <property type="match status" value="1"/>
</dbReference>
<dbReference type="NCBIfam" id="NF006875">
    <property type="entry name" value="PRK09372.1"/>
    <property type="match status" value="1"/>
</dbReference>
<dbReference type="NCBIfam" id="NF009134">
    <property type="entry name" value="PRK12487.1"/>
    <property type="match status" value="1"/>
</dbReference>
<dbReference type="PANTHER" id="PTHR33254">
    <property type="entry name" value="4-HYDROXY-4-METHYL-2-OXOGLUTARATE ALDOLASE 3-RELATED"/>
    <property type="match status" value="1"/>
</dbReference>
<dbReference type="PANTHER" id="PTHR33254:SF4">
    <property type="entry name" value="4-HYDROXY-4-METHYL-2-OXOGLUTARATE ALDOLASE 3-RELATED"/>
    <property type="match status" value="1"/>
</dbReference>
<dbReference type="Pfam" id="PF03737">
    <property type="entry name" value="RraA-like"/>
    <property type="match status" value="1"/>
</dbReference>
<dbReference type="SUPFAM" id="SSF89562">
    <property type="entry name" value="RraA-like"/>
    <property type="match status" value="1"/>
</dbReference>